<gene>
    <name evidence="1" type="primary">orn</name>
    <name type="ordered locus">Sputcn32_3287</name>
</gene>
<evidence type="ECO:0000255" key="1">
    <source>
        <dbReference type="HAMAP-Rule" id="MF_00045"/>
    </source>
</evidence>
<reference key="1">
    <citation type="submission" date="2007-04" db="EMBL/GenBank/DDBJ databases">
        <title>Complete sequence of Shewanella putrefaciens CN-32.</title>
        <authorList>
            <consortium name="US DOE Joint Genome Institute"/>
            <person name="Copeland A."/>
            <person name="Lucas S."/>
            <person name="Lapidus A."/>
            <person name="Barry K."/>
            <person name="Detter J.C."/>
            <person name="Glavina del Rio T."/>
            <person name="Hammon N."/>
            <person name="Israni S."/>
            <person name="Dalin E."/>
            <person name="Tice H."/>
            <person name="Pitluck S."/>
            <person name="Chain P."/>
            <person name="Malfatti S."/>
            <person name="Shin M."/>
            <person name="Vergez L."/>
            <person name="Schmutz J."/>
            <person name="Larimer F."/>
            <person name="Land M."/>
            <person name="Hauser L."/>
            <person name="Kyrpides N."/>
            <person name="Mikhailova N."/>
            <person name="Romine M.F."/>
            <person name="Fredrickson J."/>
            <person name="Tiedje J."/>
            <person name="Richardson P."/>
        </authorList>
    </citation>
    <scope>NUCLEOTIDE SEQUENCE [LARGE SCALE GENOMIC DNA]</scope>
    <source>
        <strain>CN-32 / ATCC BAA-453</strain>
    </source>
</reference>
<accession>A4YAL6</accession>
<name>ORN_SHEPC</name>
<dbReference type="EC" id="3.1.15.-" evidence="1"/>
<dbReference type="EMBL" id="CP000681">
    <property type="protein sequence ID" value="ABP76999.1"/>
    <property type="molecule type" value="Genomic_DNA"/>
</dbReference>
<dbReference type="SMR" id="A4YAL6"/>
<dbReference type="STRING" id="319224.Sputcn32_3287"/>
<dbReference type="KEGG" id="spc:Sputcn32_3287"/>
<dbReference type="eggNOG" id="COG1949">
    <property type="taxonomic scope" value="Bacteria"/>
</dbReference>
<dbReference type="HOGENOM" id="CLU_064761_2_0_6"/>
<dbReference type="GO" id="GO:0005737">
    <property type="term" value="C:cytoplasm"/>
    <property type="evidence" value="ECO:0007669"/>
    <property type="project" value="UniProtKB-SubCell"/>
</dbReference>
<dbReference type="GO" id="GO:0000175">
    <property type="term" value="F:3'-5'-RNA exonuclease activity"/>
    <property type="evidence" value="ECO:0007669"/>
    <property type="project" value="InterPro"/>
</dbReference>
<dbReference type="GO" id="GO:0003676">
    <property type="term" value="F:nucleic acid binding"/>
    <property type="evidence" value="ECO:0007669"/>
    <property type="project" value="InterPro"/>
</dbReference>
<dbReference type="GO" id="GO:0006259">
    <property type="term" value="P:DNA metabolic process"/>
    <property type="evidence" value="ECO:0007669"/>
    <property type="project" value="UniProtKB-ARBA"/>
</dbReference>
<dbReference type="CDD" id="cd06135">
    <property type="entry name" value="Orn"/>
    <property type="match status" value="1"/>
</dbReference>
<dbReference type="FunFam" id="3.30.420.10:FF:000003">
    <property type="entry name" value="Oligoribonuclease"/>
    <property type="match status" value="1"/>
</dbReference>
<dbReference type="Gene3D" id="3.30.420.10">
    <property type="entry name" value="Ribonuclease H-like superfamily/Ribonuclease H"/>
    <property type="match status" value="1"/>
</dbReference>
<dbReference type="HAMAP" id="MF_00045">
    <property type="entry name" value="Oligoribonuclease"/>
    <property type="match status" value="1"/>
</dbReference>
<dbReference type="InterPro" id="IPR013520">
    <property type="entry name" value="Exonuclease_RNaseT/DNA_pol3"/>
</dbReference>
<dbReference type="InterPro" id="IPR022894">
    <property type="entry name" value="Oligoribonuclease"/>
</dbReference>
<dbReference type="InterPro" id="IPR012337">
    <property type="entry name" value="RNaseH-like_sf"/>
</dbReference>
<dbReference type="InterPro" id="IPR036397">
    <property type="entry name" value="RNaseH_sf"/>
</dbReference>
<dbReference type="NCBIfam" id="NF003765">
    <property type="entry name" value="PRK05359.1"/>
    <property type="match status" value="1"/>
</dbReference>
<dbReference type="PANTHER" id="PTHR11046">
    <property type="entry name" value="OLIGORIBONUCLEASE, MITOCHONDRIAL"/>
    <property type="match status" value="1"/>
</dbReference>
<dbReference type="PANTHER" id="PTHR11046:SF0">
    <property type="entry name" value="OLIGORIBONUCLEASE, MITOCHONDRIAL"/>
    <property type="match status" value="1"/>
</dbReference>
<dbReference type="Pfam" id="PF00929">
    <property type="entry name" value="RNase_T"/>
    <property type="match status" value="1"/>
</dbReference>
<dbReference type="SMART" id="SM00479">
    <property type="entry name" value="EXOIII"/>
    <property type="match status" value="1"/>
</dbReference>
<dbReference type="SUPFAM" id="SSF53098">
    <property type="entry name" value="Ribonuclease H-like"/>
    <property type="match status" value="1"/>
</dbReference>
<organism>
    <name type="scientific">Shewanella putrefaciens (strain CN-32 / ATCC BAA-453)</name>
    <dbReference type="NCBI Taxonomy" id="319224"/>
    <lineage>
        <taxon>Bacteria</taxon>
        <taxon>Pseudomonadati</taxon>
        <taxon>Pseudomonadota</taxon>
        <taxon>Gammaproteobacteria</taxon>
        <taxon>Alteromonadales</taxon>
        <taxon>Shewanellaceae</taxon>
        <taxon>Shewanella</taxon>
    </lineage>
</organism>
<comment type="function">
    <text evidence="1">3'-to-5' exoribonuclease specific for small oligoribonucleotides.</text>
</comment>
<comment type="subcellular location">
    <subcellularLocation>
        <location evidence="1">Cytoplasm</location>
    </subcellularLocation>
</comment>
<comment type="similarity">
    <text evidence="1">Belongs to the oligoribonuclease family.</text>
</comment>
<protein>
    <recommendedName>
        <fullName evidence="1">Oligoribonuclease</fullName>
        <ecNumber evidence="1">3.1.15.-</ecNumber>
    </recommendedName>
</protein>
<sequence>MTANVNNLIWIDLEMTGLEPDVDRIIEIATLVTDQELNIIGQGPVIAIHQPDEVLAAMDDWNQKHHGESGLIDRVRASQDNEAQAVAKTIAFLEQYVPKGASPMCGNSVGQDRRFLNRYMRELEDYFHYRNLDVSTVKELVKRWSPEIMEGFKKQNTHQALQDIQESIAELQYYRSKVFKI</sequence>
<keyword id="KW-0963">Cytoplasm</keyword>
<keyword id="KW-0269">Exonuclease</keyword>
<keyword id="KW-0378">Hydrolase</keyword>
<keyword id="KW-0540">Nuclease</keyword>
<proteinExistence type="inferred from homology"/>
<feature type="chain" id="PRO_1000004288" description="Oligoribonuclease">
    <location>
        <begin position="1"/>
        <end position="181"/>
    </location>
</feature>
<feature type="domain" description="Exonuclease" evidence="1">
    <location>
        <begin position="8"/>
        <end position="171"/>
    </location>
</feature>
<feature type="active site" evidence="1">
    <location>
        <position position="129"/>
    </location>
</feature>